<comment type="function">
    <text evidence="3 5 6 7">Multi-functional protein that contributes to the endocytic process, but also to events that occur at the neck during budding and/or cytokinesis. Plays a role as an endocytic adapters with membrane-tubulation activity that associates with transmembrane cargo proteins and initiates the formation of endocytic sites. Contributes to the stabilization of the nascent clathrin-coated pit. Also plays a role in late endocytosis by mediating vesiculation. Involved in the regulation of cell cycle-dependent dynamics of the septin cytoskeleton by promoting septin turnover in different cell cycle stages. May act through the RHO2 signaling pathway to repolarize cortical actin patches in profilin-deficient cells.</text>
</comment>
<comment type="subunit">
    <text evidence="5 6">Interacts with CDC3, CDC10, CDC11, CDC12, EDE1 and EPS15.</text>
</comment>
<comment type="interaction">
    <interactant intactId="EBI-21900">
        <id>P25623</id>
    </interactant>
    <interactant intactId="EBI-21243">
        <id>P34216</id>
        <label>EDE1</label>
    </interactant>
    <organismsDiffer>false</organismsDiffer>
    <experiments>7</experiments>
</comment>
<comment type="interaction">
    <interactant intactId="EBI-21900">
        <id>P25623</id>
    </interactant>
    <interactant intactId="EBI-10901">
        <id>P36027</id>
        <label>MID2</label>
    </interactant>
    <organismsDiffer>false</organismsDiffer>
    <experiments>2</experiments>
</comment>
<comment type="interaction">
    <interactant intactId="EBI-21900">
        <id>P25623</id>
    </interactant>
    <interactant intactId="EBI-21900">
        <id>P25623</id>
        <label>SYP1</label>
    </interactant>
    <organismsDiffer>false</organismsDiffer>
    <experiments>2</experiments>
</comment>
<comment type="subcellular location">
    <subcellularLocation>
        <location evidence="3 5 6 7">Bud neck</location>
    </subcellularLocation>
    <text>Concentrates at the mother-bud neck and at the tip of the forming bud. As the bud grows, abundant in the mother-bud neck and in the bud. At cytokinesis, found predominantly at the junction between the mother cell and the bud. Present at the base of shmoo projections.</text>
</comment>
<comment type="miscellaneous">
    <text evidence="4">Present with 4280 molecules/cell in log phase SD medium.</text>
</comment>
<comment type="similarity">
    <text evidence="8">Belongs to the SYP1 family.</text>
</comment>
<keyword id="KW-0002">3D-structure</keyword>
<keyword id="KW-0131">Cell cycle</keyword>
<keyword id="KW-0254">Endocytosis</keyword>
<keyword id="KW-1017">Isopeptide bond</keyword>
<keyword id="KW-0597">Phosphoprotein</keyword>
<keyword id="KW-1185">Reference proteome</keyword>
<keyword id="KW-0832">Ubl conjugation</keyword>
<accession>P25623</accession>
<accession>D6VR40</accession>
<accession>P25622</accession>
<accession>Q96VH0</accession>
<organism>
    <name type="scientific">Saccharomyces cerevisiae (strain ATCC 204508 / S288c)</name>
    <name type="common">Baker's yeast</name>
    <dbReference type="NCBI Taxonomy" id="559292"/>
    <lineage>
        <taxon>Eukaryota</taxon>
        <taxon>Fungi</taxon>
        <taxon>Dikarya</taxon>
        <taxon>Ascomycota</taxon>
        <taxon>Saccharomycotina</taxon>
        <taxon>Saccharomycetes</taxon>
        <taxon>Saccharomycetales</taxon>
        <taxon>Saccharomycetaceae</taxon>
        <taxon>Saccharomyces</taxon>
    </lineage>
</organism>
<dbReference type="EMBL" id="X59720">
    <property type="protein sequence ID" value="CAC42980.1"/>
    <property type="molecule type" value="Genomic_DNA"/>
</dbReference>
<dbReference type="EMBL" id="BK006937">
    <property type="protein sequence ID" value="DAA07509.1"/>
    <property type="molecule type" value="Genomic_DNA"/>
</dbReference>
<dbReference type="PIR" id="S74291">
    <property type="entry name" value="S74291"/>
</dbReference>
<dbReference type="RefSeq" id="NP_009959.2">
    <property type="nucleotide sequence ID" value="NM_001178744.1"/>
</dbReference>
<dbReference type="PDB" id="3G9G">
    <property type="method" value="X-ray"/>
    <property type="resolution" value="2.40 A"/>
    <property type="chains" value="A=1-264"/>
</dbReference>
<dbReference type="PDB" id="3G9H">
    <property type="method" value="X-ray"/>
    <property type="resolution" value="2.80 A"/>
    <property type="chains" value="A=566-870"/>
</dbReference>
<dbReference type="PDBsum" id="3G9G"/>
<dbReference type="PDBsum" id="3G9H"/>
<dbReference type="SMR" id="P25623"/>
<dbReference type="BioGRID" id="31013">
    <property type="interactions" value="139"/>
</dbReference>
<dbReference type="ComplexPortal" id="CPX-2146">
    <property type="entry name" value="SYP1 endocytic adapter complex"/>
</dbReference>
<dbReference type="DIP" id="DIP-1758N"/>
<dbReference type="FunCoup" id="P25623">
    <property type="interactions" value="213"/>
</dbReference>
<dbReference type="IntAct" id="P25623">
    <property type="interactions" value="45"/>
</dbReference>
<dbReference type="MINT" id="P25623"/>
<dbReference type="STRING" id="4932.YCR030C"/>
<dbReference type="GlyGen" id="P25623">
    <property type="glycosylation" value="3 sites, 1 O-linked glycan (2 sites)"/>
</dbReference>
<dbReference type="iPTMnet" id="P25623"/>
<dbReference type="PaxDb" id="4932-YCR030C"/>
<dbReference type="PeptideAtlas" id="P25623"/>
<dbReference type="EnsemblFungi" id="YCR030C_mRNA">
    <property type="protein sequence ID" value="YCR030C"/>
    <property type="gene ID" value="YCR030C"/>
</dbReference>
<dbReference type="GeneID" id="850396"/>
<dbReference type="KEGG" id="sce:YCR030C"/>
<dbReference type="AGR" id="SGD:S000000626"/>
<dbReference type="SGD" id="S000000626">
    <property type="gene designation" value="SYP1"/>
</dbReference>
<dbReference type="VEuPathDB" id="FungiDB:YCR030C"/>
<dbReference type="eggNOG" id="ENOG502QQAW">
    <property type="taxonomic scope" value="Eukaryota"/>
</dbReference>
<dbReference type="HOGENOM" id="CLU_017975_0_0_1"/>
<dbReference type="InParanoid" id="P25623"/>
<dbReference type="OMA" id="FQTHEVD"/>
<dbReference type="OrthoDB" id="331602at2759"/>
<dbReference type="BioCyc" id="YEAST:G3O-29344-MONOMER"/>
<dbReference type="Reactome" id="R-SCE-8856828">
    <property type="pathway name" value="Clathrin-mediated endocytosis"/>
</dbReference>
<dbReference type="BioGRID-ORCS" id="850396">
    <property type="hits" value="9 hits in 10 CRISPR screens"/>
</dbReference>
<dbReference type="CD-CODE" id="E019EF73">
    <property type="entry name" value="Ede1 condensate"/>
</dbReference>
<dbReference type="CD-CODE" id="E03F929F">
    <property type="entry name" value="Stress granule"/>
</dbReference>
<dbReference type="EvolutionaryTrace" id="P25623"/>
<dbReference type="PRO" id="PR:P25623"/>
<dbReference type="Proteomes" id="UP000002311">
    <property type="component" value="Chromosome III"/>
</dbReference>
<dbReference type="RNAct" id="P25623">
    <property type="molecule type" value="protein"/>
</dbReference>
<dbReference type="GO" id="GO:0032153">
    <property type="term" value="C:cell division site"/>
    <property type="evidence" value="ECO:0000318"/>
    <property type="project" value="GO_Central"/>
</dbReference>
<dbReference type="GO" id="GO:0005935">
    <property type="term" value="C:cellular bud neck"/>
    <property type="evidence" value="ECO:0000314"/>
    <property type="project" value="UniProtKB"/>
</dbReference>
<dbReference type="GO" id="GO:0000144">
    <property type="term" value="C:cellular bud neck septin ring"/>
    <property type="evidence" value="ECO:0000314"/>
    <property type="project" value="SGD"/>
</dbReference>
<dbReference type="GO" id="GO:0005934">
    <property type="term" value="C:cellular bud tip"/>
    <property type="evidence" value="ECO:0000314"/>
    <property type="project" value="UniProtKB"/>
</dbReference>
<dbReference type="GO" id="GO:0005737">
    <property type="term" value="C:cytoplasm"/>
    <property type="evidence" value="ECO:0000318"/>
    <property type="project" value="GO_Central"/>
</dbReference>
<dbReference type="GO" id="GO:0061645">
    <property type="term" value="C:endocytic patch"/>
    <property type="evidence" value="ECO:0000314"/>
    <property type="project" value="ComplexPortal"/>
</dbReference>
<dbReference type="GO" id="GO:0030139">
    <property type="term" value="C:endocytic vesicle"/>
    <property type="evidence" value="ECO:0000318"/>
    <property type="project" value="GO_Central"/>
</dbReference>
<dbReference type="GO" id="GO:0001400">
    <property type="term" value="C:mating projection base"/>
    <property type="evidence" value="ECO:0000314"/>
    <property type="project" value="UniProtKB"/>
</dbReference>
<dbReference type="GO" id="GO:0043332">
    <property type="term" value="C:mating projection tip"/>
    <property type="evidence" value="ECO:0007005"/>
    <property type="project" value="SGD"/>
</dbReference>
<dbReference type="GO" id="GO:0005628">
    <property type="term" value="C:prospore membrane"/>
    <property type="evidence" value="ECO:0007005"/>
    <property type="project" value="SGD"/>
</dbReference>
<dbReference type="GO" id="GO:1990252">
    <property type="term" value="C:Syp1 complex"/>
    <property type="evidence" value="ECO:0000353"/>
    <property type="project" value="ComplexPortal"/>
</dbReference>
<dbReference type="GO" id="GO:0004857">
    <property type="term" value="F:enzyme inhibitor activity"/>
    <property type="evidence" value="ECO:0000314"/>
    <property type="project" value="SGD"/>
</dbReference>
<dbReference type="GO" id="GO:0042802">
    <property type="term" value="F:identical protein binding"/>
    <property type="evidence" value="ECO:0000353"/>
    <property type="project" value="IntAct"/>
</dbReference>
<dbReference type="GO" id="GO:0000147">
    <property type="term" value="P:actin cortical patch assembly"/>
    <property type="evidence" value="ECO:0000315"/>
    <property type="project" value="SGD"/>
</dbReference>
<dbReference type="GO" id="GO:0007117">
    <property type="term" value="P:budding cell bud growth"/>
    <property type="evidence" value="ECO:0000314"/>
    <property type="project" value="ComplexPortal"/>
</dbReference>
<dbReference type="GO" id="GO:0006897">
    <property type="term" value="P:endocytosis"/>
    <property type="evidence" value="ECO:0007669"/>
    <property type="project" value="UniProtKB-KW"/>
</dbReference>
<dbReference type="GO" id="GO:0045807">
    <property type="term" value="P:positive regulation of endocytosis"/>
    <property type="evidence" value="ECO:0000314"/>
    <property type="project" value="ComplexPortal"/>
</dbReference>
<dbReference type="GO" id="GO:0032185">
    <property type="term" value="P:septin cytoskeleton organization"/>
    <property type="evidence" value="ECO:0000315"/>
    <property type="project" value="SGD"/>
</dbReference>
<dbReference type="GO" id="GO:0009826">
    <property type="term" value="P:unidimensional cell growth"/>
    <property type="evidence" value="ECO:0000314"/>
    <property type="project" value="ComplexPortal"/>
</dbReference>
<dbReference type="CDD" id="cd09264">
    <property type="entry name" value="AP_Syp1_MHD"/>
    <property type="match status" value="1"/>
</dbReference>
<dbReference type="CDD" id="cd07650">
    <property type="entry name" value="F-BAR_Syp1p_like"/>
    <property type="match status" value="1"/>
</dbReference>
<dbReference type="Gene3D" id="1.20.1270.60">
    <property type="entry name" value="Arfaptin homology (AH) domain/BAR domain"/>
    <property type="match status" value="1"/>
</dbReference>
<dbReference type="InterPro" id="IPR027267">
    <property type="entry name" value="AH/BAR_dom_sf"/>
</dbReference>
<dbReference type="InterPro" id="IPR028565">
    <property type="entry name" value="MHD"/>
</dbReference>
<dbReference type="InterPro" id="IPR018808">
    <property type="entry name" value="Muniscin_C"/>
</dbReference>
<dbReference type="InterPro" id="IPR049609">
    <property type="entry name" value="Syp1-like_MHD"/>
</dbReference>
<dbReference type="PANTHER" id="PTHR23065">
    <property type="entry name" value="PROLINE-SERINE-THREONINE PHOSPHATASE INTERACTING PROTEIN 1"/>
    <property type="match status" value="1"/>
</dbReference>
<dbReference type="PANTHER" id="PTHR23065:SF54">
    <property type="entry name" value="SUPPRESSOR OF YEAST PROFILIN DELETION"/>
    <property type="match status" value="1"/>
</dbReference>
<dbReference type="Pfam" id="PF10291">
    <property type="entry name" value="muHD"/>
    <property type="match status" value="1"/>
</dbReference>
<dbReference type="SUPFAM" id="SSF103657">
    <property type="entry name" value="BAR/IMD domain-like"/>
    <property type="match status" value="1"/>
</dbReference>
<dbReference type="PROSITE" id="PS51072">
    <property type="entry name" value="MHD"/>
    <property type="match status" value="1"/>
</dbReference>
<sequence>MTEQRTKYADSILTTKSPYEATETIRIRLSQVKLLNKDFYLLFKELANLKRNYAQQLRKIIAENEDITKILNAQMIESNVLTPQEMSAFRFNSLGELRNVWDTVIEELKSDLKSSTEYYNTLDQQVVRELKESVENNTSWRESKDLHSKLSKNAASIEHYSKNNENSSHLEEARRQWDQQSPYLFELFETIDYNRLDTLKNCMLRFQTSFSDYLLNTTKECETVMTKFLAFEPQSEIDRFAKDASQYNFQLSSSSKEVVPNNASPASATGARPVSVSNGAANTEREKKSPQKDKRKSAFGNIGHRLASASSSLTHNDLMNNEFSDSTNNSSLKSKKSSHTLRSKVGSIFGRNKTKNKRQQQSSSNSHIQASITETPNNSSTRVSSTATSSIYQKQRRPTYSSSKSNNWTPGEASDTPPLPPHATPKNVDAPVTADTPPAQTFTPSEVPPSTPQQSSPPTAKEPDSSNLPKTVPISISQPPLQPQSKTKPLPVEPASPSISLPTATVDNQPSGQVDSRPLHIRAPALPPSRKQNFIHNRDSQLYDSLPNHGSGATPTSSSLSSIPQERPVSTLSSQITGELRELNPQATGSSTSLVGQSLFQHSSLDTSQFGLNASIAEVLNASFKDGMLQNSQLIGEIALNYLPNSVMNSPLPIGINLRINNGAKFEKVILNQAFIERVAPEEFKVNPSFIDSRTLGAIKYSIKEPIAPIVIHPVWRFESHQASVVLTVKMSPSLPDEISQIVIEDLVVFVNIDGANATSALSKPQGSFSKEKKRITWRFKEPVVLTRNGEGQRLIARFITDGLAHESAKGVITKFTISETDNVALPHSGAGSGITLTCQELDENNPFGGEWLDVNTKRTLTTGNYHGLA</sequence>
<feature type="chain" id="PRO_0000072390" description="Suppressor of yeast profilin deletion">
    <location>
        <begin position="1"/>
        <end position="870"/>
    </location>
</feature>
<feature type="domain" description="MHD" evidence="1">
    <location>
        <begin position="609"/>
        <end position="869"/>
    </location>
</feature>
<feature type="region of interest" description="Disordered" evidence="2">
    <location>
        <begin position="252"/>
        <end position="298"/>
    </location>
</feature>
<feature type="region of interest" description="Disordered" evidence="2">
    <location>
        <begin position="310"/>
        <end position="574"/>
    </location>
</feature>
<feature type="compositionally biased region" description="Polar residues" evidence="2">
    <location>
        <begin position="252"/>
        <end position="267"/>
    </location>
</feature>
<feature type="compositionally biased region" description="Basic and acidic residues" evidence="2">
    <location>
        <begin position="283"/>
        <end position="292"/>
    </location>
</feature>
<feature type="compositionally biased region" description="Polar residues" evidence="2">
    <location>
        <begin position="310"/>
        <end position="323"/>
    </location>
</feature>
<feature type="compositionally biased region" description="Basic residues" evidence="2">
    <location>
        <begin position="333"/>
        <end position="342"/>
    </location>
</feature>
<feature type="compositionally biased region" description="Polar residues" evidence="2">
    <location>
        <begin position="367"/>
        <end position="378"/>
    </location>
</feature>
<feature type="compositionally biased region" description="Low complexity" evidence="2">
    <location>
        <begin position="379"/>
        <end position="390"/>
    </location>
</feature>
<feature type="compositionally biased region" description="Polar residues" evidence="2">
    <location>
        <begin position="398"/>
        <end position="409"/>
    </location>
</feature>
<feature type="compositionally biased region" description="Low complexity" evidence="2">
    <location>
        <begin position="473"/>
        <end position="485"/>
    </location>
</feature>
<feature type="compositionally biased region" description="Polar residues" evidence="2">
    <location>
        <begin position="497"/>
        <end position="514"/>
    </location>
</feature>
<feature type="modified residue" description="Phosphoserine" evidence="9 11">
    <location>
        <position position="264"/>
    </location>
</feature>
<feature type="modified residue" description="Phosphoserine" evidence="11">
    <location>
        <position position="331"/>
    </location>
</feature>
<feature type="modified residue" description="Phosphothreonine" evidence="11">
    <location>
        <position position="416"/>
    </location>
</feature>
<feature type="modified residue" description="Phosphoserine" evidence="9 11">
    <location>
        <position position="496"/>
    </location>
</feature>
<feature type="modified residue" description="Phosphoserine" evidence="9">
    <location>
        <position position="500"/>
    </location>
</feature>
<feature type="modified residue" description="Phosphothreonine" evidence="10">
    <location>
        <position position="577"/>
    </location>
</feature>
<feature type="cross-link" description="Glycyl lysine isopeptide (Lys-Gly) (interchain with G-Cter in ubiquitin)" evidence="12">
    <location>
        <position position="256"/>
    </location>
</feature>
<feature type="helix" evidence="13">
    <location>
        <begin position="7"/>
        <end position="11"/>
    </location>
</feature>
<feature type="turn" evidence="13">
    <location>
        <begin position="12"/>
        <end position="15"/>
    </location>
</feature>
<feature type="helix" evidence="13">
    <location>
        <begin position="18"/>
        <end position="64"/>
    </location>
</feature>
<feature type="helix" evidence="13">
    <location>
        <begin position="67"/>
        <end position="77"/>
    </location>
</feature>
<feature type="helix" evidence="13">
    <location>
        <begin position="83"/>
        <end position="88"/>
    </location>
</feature>
<feature type="helix" evidence="13">
    <location>
        <begin position="97"/>
        <end position="125"/>
    </location>
</feature>
<feature type="helix" evidence="13">
    <location>
        <begin position="127"/>
        <end position="131"/>
    </location>
</feature>
<feature type="strand" evidence="13">
    <location>
        <begin position="133"/>
        <end position="136"/>
    </location>
</feature>
<feature type="helix" evidence="13">
    <location>
        <begin position="138"/>
        <end position="159"/>
    </location>
</feature>
<feature type="helix" evidence="13">
    <location>
        <begin position="168"/>
        <end position="230"/>
    </location>
</feature>
<feature type="helix" evidence="13">
    <location>
        <begin position="233"/>
        <end position="246"/>
    </location>
</feature>
<feature type="strand" evidence="14">
    <location>
        <begin position="611"/>
        <end position="625"/>
    </location>
</feature>
<feature type="strand" evidence="14">
    <location>
        <begin position="628"/>
        <end position="643"/>
    </location>
</feature>
<feature type="strand" evidence="14">
    <location>
        <begin position="646"/>
        <end position="648"/>
    </location>
</feature>
<feature type="strand" evidence="14">
    <location>
        <begin position="654"/>
        <end position="661"/>
    </location>
</feature>
<feature type="helix" evidence="14">
    <location>
        <begin position="663"/>
        <end position="665"/>
    </location>
</feature>
<feature type="strand" evidence="14">
    <location>
        <begin position="666"/>
        <end position="671"/>
    </location>
</feature>
<feature type="turn" evidence="14">
    <location>
        <begin position="673"/>
        <end position="675"/>
    </location>
</feature>
<feature type="strand" evidence="14">
    <location>
        <begin position="676"/>
        <end position="680"/>
    </location>
</feature>
<feature type="strand" evidence="14">
    <location>
        <begin position="683"/>
        <end position="686"/>
    </location>
</feature>
<feature type="turn" evidence="14">
    <location>
        <begin position="688"/>
        <end position="691"/>
    </location>
</feature>
<feature type="strand" evidence="14">
    <location>
        <begin position="695"/>
        <end position="705"/>
    </location>
</feature>
<feature type="strand" evidence="14">
    <location>
        <begin position="709"/>
        <end position="718"/>
    </location>
</feature>
<feature type="strand" evidence="14">
    <location>
        <begin position="720"/>
        <end position="731"/>
    </location>
</feature>
<feature type="strand" evidence="14">
    <location>
        <begin position="741"/>
        <end position="753"/>
    </location>
</feature>
<feature type="strand" evidence="14">
    <location>
        <begin position="758"/>
        <end position="766"/>
    </location>
</feature>
<feature type="strand" evidence="14">
    <location>
        <begin position="771"/>
        <end position="773"/>
    </location>
</feature>
<feature type="strand" evidence="14">
    <location>
        <begin position="775"/>
        <end position="779"/>
    </location>
</feature>
<feature type="strand" evidence="14">
    <location>
        <begin position="784"/>
        <end position="787"/>
    </location>
</feature>
<feature type="strand" evidence="14">
    <location>
        <begin position="793"/>
        <end position="803"/>
    </location>
</feature>
<feature type="strand" evidence="14">
    <location>
        <begin position="812"/>
        <end position="818"/>
    </location>
</feature>
<feature type="turn" evidence="14">
    <location>
        <begin position="827"/>
        <end position="830"/>
    </location>
</feature>
<feature type="strand" evidence="14">
    <location>
        <begin position="836"/>
        <end position="845"/>
    </location>
</feature>
<feature type="strand" evidence="14">
    <location>
        <begin position="856"/>
        <end position="869"/>
    </location>
</feature>
<proteinExistence type="evidence at protein level"/>
<protein>
    <recommendedName>
        <fullName>Suppressor of yeast profilin deletion</fullName>
    </recommendedName>
</protein>
<reference key="1">
    <citation type="journal article" date="1992" name="Nature">
        <title>The complete DNA sequence of yeast chromosome III.</title>
        <authorList>
            <person name="Oliver S.G."/>
            <person name="van der Aart Q.J.M."/>
            <person name="Agostoni-Carbone M.L."/>
            <person name="Aigle M."/>
            <person name="Alberghina L."/>
            <person name="Alexandraki D."/>
            <person name="Antoine G."/>
            <person name="Anwar R."/>
            <person name="Ballesta J.P.G."/>
            <person name="Benit P."/>
            <person name="Berben G."/>
            <person name="Bergantino E."/>
            <person name="Biteau N."/>
            <person name="Bolle P.-A."/>
            <person name="Bolotin-Fukuhara M."/>
            <person name="Brown A."/>
            <person name="Brown A.J.P."/>
            <person name="Buhler J.-M."/>
            <person name="Carcano C."/>
            <person name="Carignani G."/>
            <person name="Cederberg H."/>
            <person name="Chanet R."/>
            <person name="Contreras R."/>
            <person name="Crouzet M."/>
            <person name="Daignan-Fornier B."/>
            <person name="Defoor E."/>
            <person name="Delgado M.D."/>
            <person name="Demolder J."/>
            <person name="Doira C."/>
            <person name="Dubois E."/>
            <person name="Dujon B."/>
            <person name="Duesterhoeft A."/>
            <person name="Erdmann D."/>
            <person name="Esteban M."/>
            <person name="Fabre F."/>
            <person name="Fairhead C."/>
            <person name="Faye G."/>
            <person name="Feldmann H."/>
            <person name="Fiers W."/>
            <person name="Francingues-Gaillard M.-C."/>
            <person name="Franco L."/>
            <person name="Frontali L."/>
            <person name="Fukuhara H."/>
            <person name="Fuller L.J."/>
            <person name="Galland P."/>
            <person name="Gent M.E."/>
            <person name="Gigot D."/>
            <person name="Gilliquet V."/>
            <person name="Glansdorff N."/>
            <person name="Goffeau A."/>
            <person name="Grenson M."/>
            <person name="Grisanti P."/>
            <person name="Grivell L.A."/>
            <person name="de Haan M."/>
            <person name="Haasemann M."/>
            <person name="Hatat D."/>
            <person name="Hoenicka J."/>
            <person name="Hegemann J.H."/>
            <person name="Herbert C.J."/>
            <person name="Hilger F."/>
            <person name="Hohmann S."/>
            <person name="Hollenberg C.P."/>
            <person name="Huse K."/>
            <person name="Iborra F."/>
            <person name="Indge K.J."/>
            <person name="Isono K."/>
            <person name="Jacq C."/>
            <person name="Jacquet M."/>
            <person name="James C.M."/>
            <person name="Jauniaux J.-C."/>
            <person name="Jia Y."/>
            <person name="Jimenez A."/>
            <person name="Kelly A."/>
            <person name="Kleinhans U."/>
            <person name="Kreisl P."/>
            <person name="Lanfranchi G."/>
            <person name="Lewis C."/>
            <person name="van der Linden C.G."/>
            <person name="Lucchini G."/>
            <person name="Lutzenkirchen K."/>
            <person name="Maat M.J."/>
            <person name="Mallet L."/>
            <person name="Mannhaupt G."/>
            <person name="Martegani E."/>
            <person name="Mathieu A."/>
            <person name="Maurer C.T.C."/>
            <person name="McConnell D."/>
            <person name="McKee R.A."/>
            <person name="Messenguy F."/>
            <person name="Mewes H.-W."/>
            <person name="Molemans F."/>
            <person name="Montague M.A."/>
            <person name="Muzi Falconi M."/>
            <person name="Navas L."/>
            <person name="Newlon C.S."/>
            <person name="Noone D."/>
            <person name="Pallier C."/>
            <person name="Panzeri L."/>
            <person name="Pearson B.M."/>
            <person name="Perea J."/>
            <person name="Philippsen P."/>
            <person name="Pierard A."/>
            <person name="Planta R.J."/>
            <person name="Plevani P."/>
            <person name="Poetsch B."/>
            <person name="Pohl F.M."/>
            <person name="Purnelle B."/>
            <person name="Ramezani Rad M."/>
            <person name="Rasmussen S.W."/>
            <person name="Raynal A."/>
            <person name="Remacha M.A."/>
            <person name="Richterich P."/>
            <person name="Roberts A.B."/>
            <person name="Rodriguez F."/>
            <person name="Sanz E."/>
            <person name="Schaaff-Gerstenschlaeger I."/>
            <person name="Scherens B."/>
            <person name="Schweitzer B."/>
            <person name="Shu Y."/>
            <person name="Skala J."/>
            <person name="Slonimski P.P."/>
            <person name="Sor F."/>
            <person name="Soustelle C."/>
            <person name="Spiegelberg R."/>
            <person name="Stateva L.I."/>
            <person name="Steensma H.Y."/>
            <person name="Steiner S."/>
            <person name="Thierry A."/>
            <person name="Thireos G."/>
            <person name="Tzermia M."/>
            <person name="Urrestarazu L.A."/>
            <person name="Valle G."/>
            <person name="Vetter I."/>
            <person name="van Vliet-Reedijk J.C."/>
            <person name="Voet M."/>
            <person name="Volckaert G."/>
            <person name="Vreken P."/>
            <person name="Wang H."/>
            <person name="Warmington J.R."/>
            <person name="von Wettstein D."/>
            <person name="Wicksteed B.L."/>
            <person name="Wilson C."/>
            <person name="Wurst H."/>
            <person name="Xu G."/>
            <person name="Yoshikawa A."/>
            <person name="Zimmermann F.K."/>
            <person name="Sgouros J.G."/>
        </authorList>
    </citation>
    <scope>NUCLEOTIDE SEQUENCE [LARGE SCALE GENOMIC DNA]</scope>
    <source>
        <strain>ATCC 204508 / S288c</strain>
    </source>
</reference>
<reference key="2">
    <citation type="submission" date="1996-01" db="EMBL/GenBank/DDBJ databases">
        <authorList>
            <person name="Gromadka R."/>
        </authorList>
    </citation>
    <scope>SEQUENCE REVISION</scope>
</reference>
<reference key="3">
    <citation type="submission" date="2001-06" db="EMBL/GenBank/DDBJ databases">
        <authorList>
            <person name="Valles G."/>
            <person name="Volckaerts G."/>
        </authorList>
    </citation>
    <scope>SEQUENCE REVISION TO 824 AND 831</scope>
</reference>
<reference key="4">
    <citation type="journal article" date="2014" name="G3 (Bethesda)">
        <title>The reference genome sequence of Saccharomyces cerevisiae: Then and now.</title>
        <authorList>
            <person name="Engel S.R."/>
            <person name="Dietrich F.S."/>
            <person name="Fisk D.G."/>
            <person name="Binkley G."/>
            <person name="Balakrishnan R."/>
            <person name="Costanzo M.C."/>
            <person name="Dwight S.S."/>
            <person name="Hitz B.C."/>
            <person name="Karra K."/>
            <person name="Nash R.S."/>
            <person name="Weng S."/>
            <person name="Wong E.D."/>
            <person name="Lloyd P."/>
            <person name="Skrzypek M.S."/>
            <person name="Miyasato S.R."/>
            <person name="Simison M."/>
            <person name="Cherry J.M."/>
        </authorList>
    </citation>
    <scope>GENOME REANNOTATION</scope>
    <source>
        <strain>ATCC 204508 / S288c</strain>
    </source>
</reference>
<reference key="5">
    <citation type="journal article" date="2000" name="Genetics">
        <title>Suppression of the profilin-deficient phenotype by the RHO2 signaling pathway in Saccharomyces cerevisiae.</title>
        <authorList>
            <person name="Marcoux N."/>
            <person name="Cloutier S."/>
            <person name="Zakrzewska E."/>
            <person name="Charest P.-M."/>
            <person name="Bourbonnais Y."/>
            <person name="Pallotta D."/>
        </authorList>
    </citation>
    <scope>FUNCTION</scope>
    <scope>SUBCELLULAR LOCATION</scope>
</reference>
<reference key="6">
    <citation type="journal article" date="2003" name="Nature">
        <title>Global analysis of protein expression in yeast.</title>
        <authorList>
            <person name="Ghaemmaghami S."/>
            <person name="Huh W.-K."/>
            <person name="Bower K."/>
            <person name="Howson R.W."/>
            <person name="Belle A."/>
            <person name="Dephoure N."/>
            <person name="O'Shea E.K."/>
            <person name="Weissman J.S."/>
        </authorList>
    </citation>
    <scope>LEVEL OF PROTEIN EXPRESSION [LARGE SCALE ANALYSIS]</scope>
</reference>
<reference key="7">
    <citation type="journal article" date="2007" name="J. Proteome Res.">
        <title>Large-scale phosphorylation analysis of alpha-factor-arrested Saccharomyces cerevisiae.</title>
        <authorList>
            <person name="Li X."/>
            <person name="Gerber S.A."/>
            <person name="Rudner A.D."/>
            <person name="Beausoleil S.A."/>
            <person name="Haas W."/>
            <person name="Villen J."/>
            <person name="Elias J.E."/>
            <person name="Gygi S.P."/>
        </authorList>
    </citation>
    <scope>PHOSPHORYLATION [LARGE SCALE ANALYSIS] AT SER-264; SER-496 AND SER-500</scope>
    <scope>IDENTIFICATION BY MASS SPECTROMETRY [LARGE SCALE ANALYSIS]</scope>
    <source>
        <strain>ADR376</strain>
    </source>
</reference>
<reference key="8">
    <citation type="journal article" date="2008" name="Genetics">
        <title>A novel septin-associated protein, Syp1p, is required for normal cell cycle-dependent septin cytoskeleton dynamics in yeast.</title>
        <authorList>
            <person name="Qiu W."/>
            <person name="Neo S.P."/>
            <person name="Yu X."/>
            <person name="Cai M."/>
        </authorList>
    </citation>
    <scope>FUNCTION</scope>
    <scope>SUBCELLULAR LOCATION</scope>
    <scope>INTERACTION WITH CDC3; CDC10; CDC11 AND CDC12</scope>
</reference>
<reference key="9">
    <citation type="journal article" date="2008" name="Mol. Cell. Proteomics">
        <title>A multidimensional chromatography technology for in-depth phosphoproteome analysis.</title>
        <authorList>
            <person name="Albuquerque C.P."/>
            <person name="Smolka M.B."/>
            <person name="Payne S.H."/>
            <person name="Bafna V."/>
            <person name="Eng J."/>
            <person name="Zhou H."/>
        </authorList>
    </citation>
    <scope>PHOSPHORYLATION [LARGE SCALE ANALYSIS] AT THR-577</scope>
    <scope>IDENTIFICATION BY MASS SPECTROMETRY [LARGE SCALE ANALYSIS]</scope>
</reference>
<reference key="10">
    <citation type="journal article" date="2009" name="Mol. Biol. Cell">
        <title>Early-arriving Syp1p and Ede1p function in endocytic site placement and formation in budding yeast.</title>
        <authorList>
            <person name="Stimpson H.E."/>
            <person name="Toret C.P."/>
            <person name="Cheng A.T."/>
            <person name="Pauly B.S."/>
            <person name="Drubin D.G."/>
        </authorList>
    </citation>
    <scope>SUBCELLULAR LOCATION</scope>
    <scope>FUNCTION</scope>
</reference>
<reference key="11">
    <citation type="journal article" date="2009" name="Science">
        <title>Global analysis of Cdk1 substrate phosphorylation sites provides insights into evolution.</title>
        <authorList>
            <person name="Holt L.J."/>
            <person name="Tuch B.B."/>
            <person name="Villen J."/>
            <person name="Johnson A.D."/>
            <person name="Gygi S.P."/>
            <person name="Morgan D.O."/>
        </authorList>
    </citation>
    <scope>PHOSPHORYLATION [LARGE SCALE ANALYSIS] AT SER-264; SER-331; THR-416 AND SER-496</scope>
    <scope>IDENTIFICATION BY MASS SPECTROMETRY [LARGE SCALE ANALYSIS]</scope>
</reference>
<reference key="12">
    <citation type="journal article" date="2012" name="Proteomics">
        <title>Sites of ubiquitin attachment in Saccharomyces cerevisiae.</title>
        <authorList>
            <person name="Starita L.M."/>
            <person name="Lo R.S."/>
            <person name="Eng J.K."/>
            <person name="von Haller P.D."/>
            <person name="Fields S."/>
        </authorList>
    </citation>
    <scope>UBIQUITINATION [LARGE SCALE ANALYSIS] AT LYS-256</scope>
    <scope>IDENTIFICATION BY MASS SPECTROMETRY [LARGE SCALE ANALYSIS]</scope>
</reference>
<reference key="13">
    <citation type="journal article" date="2009" name="EMBO J.">
        <title>Syp1 is a conserved endocytic adaptor that contains domains involved in cargo selection and membrane tubulation.</title>
        <authorList>
            <person name="Reider A."/>
            <person name="Barker S.L."/>
            <person name="Mishra S.K."/>
            <person name="Im Y.J."/>
            <person name="Maldonado-Baez L."/>
            <person name="Hurley J.H."/>
            <person name="Traub L.M."/>
            <person name="Wendland B."/>
        </authorList>
    </citation>
    <scope>X-RAY CRYSTALLOGRAPHY (2.4 ANGSTROMS) OF 1-264 AND 566-870</scope>
    <scope>INTERACTION WITH EDE1</scope>
    <scope>SUBCELLULAR LOCATION</scope>
    <scope>FUNCTION</scope>
</reference>
<gene>
    <name type="primary">SYP1</name>
    <name type="ordered locus">YCR030C</name>
    <name type="ORF">YCR30C/YCR29C</name>
</gene>
<evidence type="ECO:0000255" key="1">
    <source>
        <dbReference type="PROSITE-ProRule" id="PRU00404"/>
    </source>
</evidence>
<evidence type="ECO:0000256" key="2">
    <source>
        <dbReference type="SAM" id="MobiDB-lite"/>
    </source>
</evidence>
<evidence type="ECO:0000269" key="3">
    <source>
    </source>
</evidence>
<evidence type="ECO:0000269" key="4">
    <source>
    </source>
</evidence>
<evidence type="ECO:0000269" key="5">
    <source>
    </source>
</evidence>
<evidence type="ECO:0000269" key="6">
    <source>
    </source>
</evidence>
<evidence type="ECO:0000269" key="7">
    <source>
    </source>
</evidence>
<evidence type="ECO:0000305" key="8"/>
<evidence type="ECO:0007744" key="9">
    <source>
    </source>
</evidence>
<evidence type="ECO:0007744" key="10">
    <source>
    </source>
</evidence>
<evidence type="ECO:0007744" key="11">
    <source>
    </source>
</evidence>
<evidence type="ECO:0007744" key="12">
    <source>
    </source>
</evidence>
<evidence type="ECO:0007829" key="13">
    <source>
        <dbReference type="PDB" id="3G9G"/>
    </source>
</evidence>
<evidence type="ECO:0007829" key="14">
    <source>
        <dbReference type="PDB" id="3G9H"/>
    </source>
</evidence>
<name>SYP1_YEAST</name>